<dbReference type="EC" id="2.7.7.72" evidence="1"/>
<dbReference type="EMBL" id="CP000003">
    <property type="protein sequence ID" value="AAT86826.1"/>
    <property type="molecule type" value="Genomic_DNA"/>
</dbReference>
<dbReference type="RefSeq" id="WP_011017668.1">
    <property type="nucleotide sequence ID" value="NC_006086.1"/>
</dbReference>
<dbReference type="SMR" id="Q5XCN7"/>
<dbReference type="KEGG" id="spa:M6_Spy0691"/>
<dbReference type="HOGENOM" id="CLU_015961_3_0_9"/>
<dbReference type="Proteomes" id="UP000001167">
    <property type="component" value="Chromosome"/>
</dbReference>
<dbReference type="GO" id="GO:0005524">
    <property type="term" value="F:ATP binding"/>
    <property type="evidence" value="ECO:0007669"/>
    <property type="project" value="UniProtKB-UniRule"/>
</dbReference>
<dbReference type="GO" id="GO:0004810">
    <property type="term" value="F:CCA tRNA nucleotidyltransferase activity"/>
    <property type="evidence" value="ECO:0007669"/>
    <property type="project" value="UniProtKB-UniRule"/>
</dbReference>
<dbReference type="GO" id="GO:0000287">
    <property type="term" value="F:magnesium ion binding"/>
    <property type="evidence" value="ECO:0007669"/>
    <property type="project" value="UniProtKB-UniRule"/>
</dbReference>
<dbReference type="GO" id="GO:0000049">
    <property type="term" value="F:tRNA binding"/>
    <property type="evidence" value="ECO:0007669"/>
    <property type="project" value="UniProtKB-UniRule"/>
</dbReference>
<dbReference type="GO" id="GO:0042245">
    <property type="term" value="P:RNA repair"/>
    <property type="evidence" value="ECO:0007669"/>
    <property type="project" value="UniProtKB-KW"/>
</dbReference>
<dbReference type="GO" id="GO:0001680">
    <property type="term" value="P:tRNA 3'-terminal CCA addition"/>
    <property type="evidence" value="ECO:0007669"/>
    <property type="project" value="UniProtKB-UniRule"/>
</dbReference>
<dbReference type="CDD" id="cd05398">
    <property type="entry name" value="NT_ClassII-CCAase"/>
    <property type="match status" value="1"/>
</dbReference>
<dbReference type="Gene3D" id="1.10.110.30">
    <property type="match status" value="1"/>
</dbReference>
<dbReference type="Gene3D" id="1.10.246.80">
    <property type="match status" value="1"/>
</dbReference>
<dbReference type="Gene3D" id="1.20.58.560">
    <property type="match status" value="1"/>
</dbReference>
<dbReference type="Gene3D" id="3.30.460.10">
    <property type="entry name" value="Beta Polymerase, domain 2"/>
    <property type="match status" value="1"/>
</dbReference>
<dbReference type="HAMAP" id="MF_01263">
    <property type="entry name" value="CCA_bact_type3"/>
    <property type="match status" value="1"/>
</dbReference>
<dbReference type="InterPro" id="IPR050264">
    <property type="entry name" value="Bact_CCA-adding_enz_type3_sf"/>
</dbReference>
<dbReference type="InterPro" id="IPR032810">
    <property type="entry name" value="CCA-adding_enz_C"/>
</dbReference>
<dbReference type="InterPro" id="IPR023068">
    <property type="entry name" value="CCA-adding_enz_firmicutes"/>
</dbReference>
<dbReference type="InterPro" id="IPR043519">
    <property type="entry name" value="NT_sf"/>
</dbReference>
<dbReference type="InterPro" id="IPR002646">
    <property type="entry name" value="PolA_pol_head_dom"/>
</dbReference>
<dbReference type="InterPro" id="IPR032828">
    <property type="entry name" value="PolyA_RNA-bd"/>
</dbReference>
<dbReference type="NCBIfam" id="NF009814">
    <property type="entry name" value="PRK13299.1"/>
    <property type="match status" value="1"/>
</dbReference>
<dbReference type="PANTHER" id="PTHR46173">
    <property type="entry name" value="CCA TRNA NUCLEOTIDYLTRANSFERASE 1, MITOCHONDRIAL"/>
    <property type="match status" value="1"/>
</dbReference>
<dbReference type="PANTHER" id="PTHR46173:SF1">
    <property type="entry name" value="CCA TRNA NUCLEOTIDYLTRANSFERASE 1, MITOCHONDRIAL"/>
    <property type="match status" value="1"/>
</dbReference>
<dbReference type="Pfam" id="PF01743">
    <property type="entry name" value="PolyA_pol"/>
    <property type="match status" value="1"/>
</dbReference>
<dbReference type="Pfam" id="PF12627">
    <property type="entry name" value="PolyA_pol_RNAbd"/>
    <property type="match status" value="1"/>
</dbReference>
<dbReference type="Pfam" id="PF13735">
    <property type="entry name" value="tRNA_NucTran2_2"/>
    <property type="match status" value="1"/>
</dbReference>
<dbReference type="SUPFAM" id="SSF81301">
    <property type="entry name" value="Nucleotidyltransferase"/>
    <property type="match status" value="1"/>
</dbReference>
<dbReference type="SUPFAM" id="SSF81891">
    <property type="entry name" value="Poly A polymerase C-terminal region-like"/>
    <property type="match status" value="1"/>
</dbReference>
<comment type="function">
    <text evidence="1">Catalyzes the addition and repair of the essential 3'-terminal CCA sequence in tRNAs without using a nucleic acid template. Adds these three nucleotides in the order of C, C, and A to the tRNA nucleotide-73, using CTP and ATP as substrates and producing inorganic pyrophosphate. tRNA 3'-terminal CCA addition is required both for tRNA processing and repair. Also involved in tRNA surveillance by mediating tandem CCA addition to generate a CCACCA at the 3' terminus of unstable tRNAs. While stable tRNAs receive only 3'-terminal CCA, unstable tRNAs are marked with CCACCA and rapidly degraded.</text>
</comment>
<comment type="catalytic activity">
    <reaction evidence="1">
        <text>a tRNA precursor + 2 CTP + ATP = a tRNA with a 3' CCA end + 3 diphosphate</text>
        <dbReference type="Rhea" id="RHEA:14433"/>
        <dbReference type="Rhea" id="RHEA-COMP:10465"/>
        <dbReference type="Rhea" id="RHEA-COMP:10468"/>
        <dbReference type="ChEBI" id="CHEBI:30616"/>
        <dbReference type="ChEBI" id="CHEBI:33019"/>
        <dbReference type="ChEBI" id="CHEBI:37563"/>
        <dbReference type="ChEBI" id="CHEBI:74896"/>
        <dbReference type="ChEBI" id="CHEBI:83071"/>
        <dbReference type="EC" id="2.7.7.72"/>
    </reaction>
</comment>
<comment type="catalytic activity">
    <reaction evidence="1">
        <text>a tRNA with a 3' CCA end + 2 CTP + ATP = a tRNA with a 3' CCACCA end + 3 diphosphate</text>
        <dbReference type="Rhea" id="RHEA:76235"/>
        <dbReference type="Rhea" id="RHEA-COMP:10468"/>
        <dbReference type="Rhea" id="RHEA-COMP:18655"/>
        <dbReference type="ChEBI" id="CHEBI:30616"/>
        <dbReference type="ChEBI" id="CHEBI:33019"/>
        <dbReference type="ChEBI" id="CHEBI:37563"/>
        <dbReference type="ChEBI" id="CHEBI:83071"/>
        <dbReference type="ChEBI" id="CHEBI:195187"/>
    </reaction>
    <physiologicalReaction direction="left-to-right" evidence="1">
        <dbReference type="Rhea" id="RHEA:76236"/>
    </physiologicalReaction>
</comment>
<comment type="cofactor">
    <cofactor evidence="1">
        <name>Mg(2+)</name>
        <dbReference type="ChEBI" id="CHEBI:18420"/>
    </cofactor>
</comment>
<comment type="subunit">
    <text evidence="1">Homodimer.</text>
</comment>
<comment type="miscellaneous">
    <text evidence="1">A single active site specifically recognizes both ATP and CTP and is responsible for their addition.</text>
</comment>
<comment type="similarity">
    <text evidence="1">Belongs to the tRNA nucleotidyltransferase/poly(A) polymerase family. Bacterial CCA-adding enzyme type 3 subfamily.</text>
</comment>
<proteinExistence type="inferred from homology"/>
<protein>
    <recommendedName>
        <fullName evidence="1">CCA-adding enzyme</fullName>
        <ecNumber evidence="1">2.7.7.72</ecNumber>
    </recommendedName>
    <alternativeName>
        <fullName evidence="1">CCA tRNA nucleotidyltransferase</fullName>
    </alternativeName>
    <alternativeName>
        <fullName evidence="1">tRNA CCA-pyrophosphorylase</fullName>
    </alternativeName>
    <alternativeName>
        <fullName evidence="1">tRNA adenylyl-/cytidylyl- transferase</fullName>
    </alternativeName>
    <alternativeName>
        <fullName evidence="1">tRNA nucleotidyltransferase</fullName>
    </alternativeName>
    <alternativeName>
        <fullName evidence="1">tRNA-NT</fullName>
    </alternativeName>
</protein>
<reference key="1">
    <citation type="journal article" date="2004" name="J. Infect. Dis.">
        <title>Progress toward characterization of the group A Streptococcus metagenome: complete genome sequence of a macrolide-resistant serotype M6 strain.</title>
        <authorList>
            <person name="Banks D.J."/>
            <person name="Porcella S.F."/>
            <person name="Barbian K.D."/>
            <person name="Beres S.B."/>
            <person name="Philips L.E."/>
            <person name="Voyich J.M."/>
            <person name="DeLeo F.R."/>
            <person name="Martin J.M."/>
            <person name="Somerville G.A."/>
            <person name="Musser J.M."/>
        </authorList>
    </citation>
    <scope>NUCLEOTIDE SEQUENCE [LARGE SCALE GENOMIC DNA]</scope>
    <source>
        <strain>ATCC BAA-946 / MGAS10394</strain>
    </source>
</reference>
<name>CCA_STRP6</name>
<keyword id="KW-0067">ATP-binding</keyword>
<keyword id="KW-0460">Magnesium</keyword>
<keyword id="KW-0479">Metal-binding</keyword>
<keyword id="KW-0547">Nucleotide-binding</keyword>
<keyword id="KW-0548">Nucleotidyltransferase</keyword>
<keyword id="KW-0692">RNA repair</keyword>
<keyword id="KW-0694">RNA-binding</keyword>
<keyword id="KW-0808">Transferase</keyword>
<keyword id="KW-0819">tRNA processing</keyword>
<accession>Q5XCN7</accession>
<organism>
    <name type="scientific">Streptococcus pyogenes serotype M6 (strain ATCC BAA-946 / MGAS10394)</name>
    <dbReference type="NCBI Taxonomy" id="286636"/>
    <lineage>
        <taxon>Bacteria</taxon>
        <taxon>Bacillati</taxon>
        <taxon>Bacillota</taxon>
        <taxon>Bacilli</taxon>
        <taxon>Lactobacillales</taxon>
        <taxon>Streptococcaceae</taxon>
        <taxon>Streptococcus</taxon>
    </lineage>
</organism>
<feature type="chain" id="PRO_0000139060" description="CCA-adding enzyme">
    <location>
        <begin position="1"/>
        <end position="402"/>
    </location>
</feature>
<feature type="binding site" evidence="1">
    <location>
        <position position="32"/>
    </location>
    <ligand>
        <name>ATP</name>
        <dbReference type="ChEBI" id="CHEBI:30616"/>
    </ligand>
</feature>
<feature type="binding site" evidence="1">
    <location>
        <position position="32"/>
    </location>
    <ligand>
        <name>CTP</name>
        <dbReference type="ChEBI" id="CHEBI:37563"/>
    </ligand>
</feature>
<feature type="binding site" evidence="1">
    <location>
        <position position="35"/>
    </location>
    <ligand>
        <name>ATP</name>
        <dbReference type="ChEBI" id="CHEBI:30616"/>
    </ligand>
</feature>
<feature type="binding site" evidence="1">
    <location>
        <position position="35"/>
    </location>
    <ligand>
        <name>CTP</name>
        <dbReference type="ChEBI" id="CHEBI:37563"/>
    </ligand>
</feature>
<feature type="binding site" evidence="1">
    <location>
        <position position="45"/>
    </location>
    <ligand>
        <name>Mg(2+)</name>
        <dbReference type="ChEBI" id="CHEBI:18420"/>
    </ligand>
</feature>
<feature type="binding site" evidence="1">
    <location>
        <position position="47"/>
    </location>
    <ligand>
        <name>Mg(2+)</name>
        <dbReference type="ChEBI" id="CHEBI:18420"/>
    </ligand>
</feature>
<feature type="binding site" evidence="1">
    <location>
        <position position="116"/>
    </location>
    <ligand>
        <name>ATP</name>
        <dbReference type="ChEBI" id="CHEBI:30616"/>
    </ligand>
</feature>
<feature type="binding site" evidence="1">
    <location>
        <position position="116"/>
    </location>
    <ligand>
        <name>CTP</name>
        <dbReference type="ChEBI" id="CHEBI:37563"/>
    </ligand>
</feature>
<feature type="binding site" evidence="1">
    <location>
        <position position="159"/>
    </location>
    <ligand>
        <name>ATP</name>
        <dbReference type="ChEBI" id="CHEBI:30616"/>
    </ligand>
</feature>
<feature type="binding site" evidence="1">
    <location>
        <position position="159"/>
    </location>
    <ligand>
        <name>CTP</name>
        <dbReference type="ChEBI" id="CHEBI:37563"/>
    </ligand>
</feature>
<feature type="binding site" evidence="1">
    <location>
        <position position="162"/>
    </location>
    <ligand>
        <name>ATP</name>
        <dbReference type="ChEBI" id="CHEBI:30616"/>
    </ligand>
</feature>
<feature type="binding site" evidence="1">
    <location>
        <position position="162"/>
    </location>
    <ligand>
        <name>CTP</name>
        <dbReference type="ChEBI" id="CHEBI:37563"/>
    </ligand>
</feature>
<feature type="binding site" evidence="1">
    <location>
        <position position="165"/>
    </location>
    <ligand>
        <name>ATP</name>
        <dbReference type="ChEBI" id="CHEBI:30616"/>
    </ligand>
</feature>
<feature type="binding site" evidence="1">
    <location>
        <position position="165"/>
    </location>
    <ligand>
        <name>CTP</name>
        <dbReference type="ChEBI" id="CHEBI:37563"/>
    </ligand>
</feature>
<feature type="binding site" evidence="1">
    <location>
        <position position="168"/>
    </location>
    <ligand>
        <name>ATP</name>
        <dbReference type="ChEBI" id="CHEBI:30616"/>
    </ligand>
</feature>
<feature type="binding site" evidence="1">
    <location>
        <position position="168"/>
    </location>
    <ligand>
        <name>CTP</name>
        <dbReference type="ChEBI" id="CHEBI:37563"/>
    </ligand>
</feature>
<evidence type="ECO:0000255" key="1">
    <source>
        <dbReference type="HAMAP-Rule" id="MF_01263"/>
    </source>
</evidence>
<gene>
    <name evidence="1" type="primary">cca</name>
    <name type="ordered locus">M6_Spy0691</name>
</gene>
<sequence length="402" mass="46159">MKLMTMPSEFQKALPILTKIKEAGYEAYFVGGSVRDVLLERPIHDVDIATSSYPEETKAIFNRTVDVGIEHGTVLVLENGGEYEITTFRTEDVYVDYRRPSQVSFVRSLEEDLKRRDFTVNALALDENGQVIDKFRGLIDLKQKRLRAVGKAEERFEEDALRIMRGFRFAASLDFDIEAATFEAMRSHSPLLEKISVERSFTEFDKLLMAPHWRKGISAMIACQAYDYLPGLKQQEAGLNHLIVSLKDNFTFSDHHQAWAYVMISLAIEDPKSFLKAWKTSNDFQRYVTKLIALYRIRQERSFEKLDIYQYGKEMASLVEDLRKAQSLSVDMDRINTLDQALVIHDKHDIVLNGSHLIKDFGMKPGPQLGLMLEKVELAIVEGRLDNDFTTIEAFVREELAP</sequence>